<feature type="chain" id="PRO_0000272021" description="Bacilliredoxin STH2395">
    <location>
        <begin position="1"/>
        <end position="140"/>
    </location>
</feature>
<sequence length="140" mass="15020">MDLHMFVPDFQAMREELTRLGFEELRTAEEVQEKLPTAKGVTLLAINSMCGCAGGIARPAAALALRQVKPDHLMTVFAGQDKEATAAARALFPQYPPSSPSFAVLKDGQAVAMIPRSQIEGSDPQTVAQRIVEAVQAARG</sequence>
<accession>Q67LR6</accession>
<reference key="1">
    <citation type="journal article" date="2004" name="Nucleic Acids Res.">
        <title>Genome sequence of Symbiobacterium thermophilum, an uncultivable bacterium that depends on microbial commensalism.</title>
        <authorList>
            <person name="Ueda K."/>
            <person name="Yamashita A."/>
            <person name="Ishikawa J."/>
            <person name="Shimada M."/>
            <person name="Watsuji T."/>
            <person name="Morimura K."/>
            <person name="Ikeda H."/>
            <person name="Hattori M."/>
            <person name="Beppu T."/>
        </authorList>
    </citation>
    <scope>NUCLEOTIDE SEQUENCE [LARGE SCALE GENOMIC DNA]</scope>
    <source>
        <strain>DSM 24528 / JCM 14929 / IAM 14863 / T</strain>
    </source>
</reference>
<keyword id="KW-1185">Reference proteome</keyword>
<gene>
    <name type="ordered locus">STH2395</name>
</gene>
<proteinExistence type="inferred from homology"/>
<name>Y2395_SYMTH</name>
<dbReference type="EMBL" id="AP006840">
    <property type="protein sequence ID" value="BAD41380.1"/>
    <property type="molecule type" value="Genomic_DNA"/>
</dbReference>
<dbReference type="RefSeq" id="WP_011196518.1">
    <property type="nucleotide sequence ID" value="NC_006177.1"/>
</dbReference>
<dbReference type="SMR" id="Q67LR6"/>
<dbReference type="STRING" id="292459.STH2395"/>
<dbReference type="KEGG" id="sth:STH2395"/>
<dbReference type="eggNOG" id="ENOG502ZBVN">
    <property type="taxonomic scope" value="Bacteria"/>
</dbReference>
<dbReference type="HOGENOM" id="CLU_132521_0_0_9"/>
<dbReference type="Proteomes" id="UP000000417">
    <property type="component" value="Chromosome"/>
</dbReference>
<dbReference type="GO" id="GO:0045454">
    <property type="term" value="P:cell redox homeostasis"/>
    <property type="evidence" value="ECO:0000250"/>
    <property type="project" value="UniProtKB"/>
</dbReference>
<dbReference type="Gene3D" id="3.40.30.10">
    <property type="entry name" value="Glutaredoxin"/>
    <property type="match status" value="1"/>
</dbReference>
<dbReference type="InterPro" id="IPR009474">
    <property type="entry name" value="BrxB/BrxA"/>
</dbReference>
<dbReference type="NCBIfam" id="TIGR04191">
    <property type="entry name" value="YphP_YqiW"/>
    <property type="match status" value="1"/>
</dbReference>
<dbReference type="PANTHER" id="PTHR40052:SF2">
    <property type="entry name" value="BACILLIREDOXIN BRXA"/>
    <property type="match status" value="1"/>
</dbReference>
<dbReference type="PANTHER" id="PTHR40052">
    <property type="entry name" value="UPF0403 PROTEIN YQIW-RELATED"/>
    <property type="match status" value="1"/>
</dbReference>
<dbReference type="Pfam" id="PF06491">
    <property type="entry name" value="Disulph_isomer"/>
    <property type="match status" value="1"/>
</dbReference>
<organism>
    <name type="scientific">Symbiobacterium thermophilum (strain DSM 24528 / JCM 14929 / IAM 14863 / T)</name>
    <dbReference type="NCBI Taxonomy" id="292459"/>
    <lineage>
        <taxon>Bacteria</taxon>
        <taxon>Bacillati</taxon>
        <taxon>Bacillota</taxon>
        <taxon>Clostridia</taxon>
        <taxon>Eubacteriales</taxon>
        <taxon>Symbiobacteriaceae</taxon>
        <taxon>Symbiobacterium</taxon>
    </lineage>
</organism>
<evidence type="ECO:0000305" key="1"/>
<comment type="similarity">
    <text evidence="1">Belongs to the bacilliredoxin family.</text>
</comment>
<protein>
    <recommendedName>
        <fullName evidence="1">Bacilliredoxin STH2395</fullName>
    </recommendedName>
</protein>